<evidence type="ECO:0000250" key="1"/>
<evidence type="ECO:0000250" key="2">
    <source>
        <dbReference type="UniProtKB" id="P04156"/>
    </source>
</evidence>
<evidence type="ECO:0000250" key="3">
    <source>
        <dbReference type="UniProtKB" id="P04273"/>
    </source>
</evidence>
<evidence type="ECO:0000250" key="4">
    <source>
        <dbReference type="UniProtKB" id="P04925"/>
    </source>
</evidence>
<evidence type="ECO:0000255" key="5"/>
<evidence type="ECO:0000256" key="6">
    <source>
        <dbReference type="SAM" id="MobiDB-lite"/>
    </source>
</evidence>
<evidence type="ECO:0000305" key="7"/>
<feature type="signal peptide" evidence="1">
    <location>
        <begin position="1"/>
        <end position="24"/>
    </location>
</feature>
<feature type="chain" id="PRO_0000025631" description="Major prion protein">
    <location>
        <begin position="25"/>
        <end position="241"/>
    </location>
</feature>
<feature type="propeptide" id="PRO_0000025632" description="Removed in mature form" evidence="5">
    <location>
        <begin position="242"/>
        <end position="264"/>
    </location>
</feature>
<feature type="repeat" description="1">
    <location>
        <begin position="54"/>
        <end position="62"/>
    </location>
</feature>
<feature type="repeat" description="2">
    <location>
        <begin position="63"/>
        <end position="70"/>
    </location>
</feature>
<feature type="repeat" description="3">
    <location>
        <begin position="71"/>
        <end position="78"/>
    </location>
</feature>
<feature type="repeat" description="4">
    <location>
        <begin position="79"/>
        <end position="86"/>
    </location>
</feature>
<feature type="repeat" description="5">
    <location>
        <begin position="87"/>
        <end position="94"/>
    </location>
</feature>
<feature type="repeat" description="6">
    <location>
        <begin position="95"/>
        <end position="103"/>
    </location>
</feature>
<feature type="region of interest" description="Interaction with GRB2, ERI3 and SYN1" evidence="4">
    <location>
        <begin position="25"/>
        <end position="241"/>
    </location>
</feature>
<feature type="region of interest" description="Disordered" evidence="6">
    <location>
        <begin position="27"/>
        <end position="119"/>
    </location>
</feature>
<feature type="region of interest" description="6 X 8 AA tandem repeats of P-H-G-G-G-W-G-Q">
    <location>
        <begin position="54"/>
        <end position="103"/>
    </location>
</feature>
<feature type="compositionally biased region" description="Gly residues" evidence="6">
    <location>
        <begin position="55"/>
        <end position="105"/>
    </location>
</feature>
<feature type="binding site" evidence="2">
    <location>
        <position position="72"/>
    </location>
    <ligand>
        <name>Cu(2+)</name>
        <dbReference type="ChEBI" id="CHEBI:29036"/>
        <label>1</label>
    </ligand>
</feature>
<feature type="binding site" evidence="2">
    <location>
        <position position="73"/>
    </location>
    <ligand>
        <name>Cu(2+)</name>
        <dbReference type="ChEBI" id="CHEBI:29036"/>
        <label>1</label>
    </ligand>
</feature>
<feature type="binding site" evidence="2">
    <location>
        <position position="74"/>
    </location>
    <ligand>
        <name>Cu(2+)</name>
        <dbReference type="ChEBI" id="CHEBI:29036"/>
        <label>1</label>
    </ligand>
</feature>
<feature type="binding site" evidence="2">
    <location>
        <position position="80"/>
    </location>
    <ligand>
        <name>Cu(2+)</name>
        <dbReference type="ChEBI" id="CHEBI:29036"/>
        <label>2</label>
    </ligand>
</feature>
<feature type="binding site" evidence="2">
    <location>
        <position position="81"/>
    </location>
    <ligand>
        <name>Cu(2+)</name>
        <dbReference type="ChEBI" id="CHEBI:29036"/>
        <label>2</label>
    </ligand>
</feature>
<feature type="binding site" evidence="2">
    <location>
        <position position="82"/>
    </location>
    <ligand>
        <name>Cu(2+)</name>
        <dbReference type="ChEBI" id="CHEBI:29036"/>
        <label>2</label>
    </ligand>
</feature>
<feature type="binding site" evidence="2">
    <location>
        <position position="88"/>
    </location>
    <ligand>
        <name>Cu(2+)</name>
        <dbReference type="ChEBI" id="CHEBI:29036"/>
        <label>3</label>
    </ligand>
</feature>
<feature type="binding site" evidence="2">
    <location>
        <position position="89"/>
    </location>
    <ligand>
        <name>Cu(2+)</name>
        <dbReference type="ChEBI" id="CHEBI:29036"/>
        <label>3</label>
    </ligand>
</feature>
<feature type="binding site" evidence="2">
    <location>
        <position position="90"/>
    </location>
    <ligand>
        <name>Cu(2+)</name>
        <dbReference type="ChEBI" id="CHEBI:29036"/>
        <label>3</label>
    </ligand>
</feature>
<feature type="binding site" evidence="2">
    <location>
        <position position="96"/>
    </location>
    <ligand>
        <name>Cu(2+)</name>
        <dbReference type="ChEBI" id="CHEBI:29036"/>
        <label>4</label>
    </ligand>
</feature>
<feature type="binding site" evidence="2">
    <location>
        <position position="98"/>
    </location>
    <ligand>
        <name>Cu(2+)</name>
        <dbReference type="ChEBI" id="CHEBI:29036"/>
        <label>4</label>
    </ligand>
</feature>
<feature type="binding site" evidence="2">
    <location>
        <position position="99"/>
    </location>
    <ligand>
        <name>Cu(2+)</name>
        <dbReference type="ChEBI" id="CHEBI:29036"/>
        <label>4</label>
    </ligand>
</feature>
<feature type="lipid moiety-binding region" description="GPI-anchor amidated alanine" evidence="5">
    <location>
        <position position="241"/>
    </location>
</feature>
<feature type="glycosylation site" description="N-linked (GlcNAc...) asparagine" evidence="5">
    <location>
        <position position="192"/>
    </location>
</feature>
<feature type="glycosylation site" description="N-linked (GlcNAc...) asparagine" evidence="5">
    <location>
        <position position="208"/>
    </location>
</feature>
<feature type="disulfide bond" evidence="3">
    <location>
        <begin position="190"/>
        <end position="225"/>
    </location>
</feature>
<name>PRIO_BUBBU</name>
<organism>
    <name type="scientific">Bubalus bubalis</name>
    <name type="common">Domestic water buffalo</name>
    <dbReference type="NCBI Taxonomy" id="89462"/>
    <lineage>
        <taxon>Eukaryota</taxon>
        <taxon>Metazoa</taxon>
        <taxon>Chordata</taxon>
        <taxon>Craniata</taxon>
        <taxon>Vertebrata</taxon>
        <taxon>Euteleostomi</taxon>
        <taxon>Mammalia</taxon>
        <taxon>Eutheria</taxon>
        <taxon>Laurasiatheria</taxon>
        <taxon>Artiodactyla</taxon>
        <taxon>Ruminantia</taxon>
        <taxon>Pecora</taxon>
        <taxon>Bovidae</taxon>
        <taxon>Bovinae</taxon>
        <taxon>Bubalus</taxon>
    </lineage>
</organism>
<protein>
    <recommendedName>
        <fullName>Major prion protein</fullName>
        <shortName>PrP</shortName>
    </recommendedName>
    <cdAntigenName>CD230</cdAntigenName>
</protein>
<gene>
    <name type="primary">PRNP</name>
    <name type="synonym">PRP</name>
</gene>
<dbReference type="EMBL" id="AY720689">
    <property type="protein sequence ID" value="AAV30496.1"/>
    <property type="molecule type" value="Genomic_DNA"/>
</dbReference>
<dbReference type="EMBL" id="AY720690">
    <property type="protein sequence ID" value="AAV30497.1"/>
    <property type="molecule type" value="Genomic_DNA"/>
</dbReference>
<dbReference type="BMRB" id="Q5UJH8"/>
<dbReference type="SMR" id="Q5UJH8"/>
<dbReference type="GlyCosmos" id="Q5UJH8">
    <property type="glycosylation" value="2 sites, No reported glycans"/>
</dbReference>
<dbReference type="GO" id="GO:0005794">
    <property type="term" value="C:Golgi apparatus"/>
    <property type="evidence" value="ECO:0007669"/>
    <property type="project" value="UniProtKB-SubCell"/>
</dbReference>
<dbReference type="GO" id="GO:0005886">
    <property type="term" value="C:plasma membrane"/>
    <property type="evidence" value="ECO:0007669"/>
    <property type="project" value="UniProtKB-SubCell"/>
</dbReference>
<dbReference type="GO" id="GO:0098552">
    <property type="term" value="C:side of membrane"/>
    <property type="evidence" value="ECO:0007669"/>
    <property type="project" value="UniProtKB-KW"/>
</dbReference>
<dbReference type="GO" id="GO:0005507">
    <property type="term" value="F:copper ion binding"/>
    <property type="evidence" value="ECO:0000250"/>
    <property type="project" value="UniProtKB"/>
</dbReference>
<dbReference type="GO" id="GO:0051260">
    <property type="term" value="P:protein homooligomerization"/>
    <property type="evidence" value="ECO:0007669"/>
    <property type="project" value="InterPro"/>
</dbReference>
<dbReference type="FunFam" id="1.10.790.10:FF:000001">
    <property type="entry name" value="Major prion protein"/>
    <property type="match status" value="1"/>
</dbReference>
<dbReference type="Gene3D" id="1.10.790.10">
    <property type="entry name" value="Prion/Doppel protein, beta-ribbon domain"/>
    <property type="match status" value="1"/>
</dbReference>
<dbReference type="InterPro" id="IPR000817">
    <property type="entry name" value="Prion"/>
</dbReference>
<dbReference type="InterPro" id="IPR036924">
    <property type="entry name" value="Prion/Doppel_b-ribbon_dom_sf"/>
</dbReference>
<dbReference type="InterPro" id="IPR022416">
    <property type="entry name" value="Prion/Doppel_prot_b-ribbon_dom"/>
</dbReference>
<dbReference type="InterPro" id="IPR020949">
    <property type="entry name" value="Prion_copper_b_octapeptide"/>
</dbReference>
<dbReference type="InterPro" id="IPR025860">
    <property type="entry name" value="Prion_N"/>
</dbReference>
<dbReference type="PANTHER" id="PTHR15506">
    <property type="entry name" value="DOPPEL PRION"/>
    <property type="match status" value="1"/>
</dbReference>
<dbReference type="PANTHER" id="PTHR15506:SF2">
    <property type="entry name" value="MAJOR PRION PROTEIN"/>
    <property type="match status" value="1"/>
</dbReference>
<dbReference type="Pfam" id="PF00377">
    <property type="entry name" value="Prion"/>
    <property type="match status" value="1"/>
</dbReference>
<dbReference type="Pfam" id="PF11587">
    <property type="entry name" value="Prion_bPrPp"/>
    <property type="match status" value="1"/>
</dbReference>
<dbReference type="Pfam" id="PF03991">
    <property type="entry name" value="Prion_octapep"/>
    <property type="match status" value="1"/>
</dbReference>
<dbReference type="PRINTS" id="PR00341">
    <property type="entry name" value="PRION"/>
</dbReference>
<dbReference type="SMART" id="SM00157">
    <property type="entry name" value="PRP"/>
    <property type="match status" value="1"/>
</dbReference>
<dbReference type="SUPFAM" id="SSF54098">
    <property type="entry name" value="Prion-like"/>
    <property type="match status" value="1"/>
</dbReference>
<dbReference type="PROSITE" id="PS00291">
    <property type="entry name" value="PRION_1"/>
    <property type="match status" value="1"/>
</dbReference>
<dbReference type="PROSITE" id="PS00706">
    <property type="entry name" value="PRION_2"/>
    <property type="match status" value="1"/>
</dbReference>
<accession>Q5UJH8</accession>
<sequence length="264" mass="28756">MVKRHIGSWILVLFVVMWSDVGLCKKRPKPGGGWNTGGSRYPGQGSPGGNRYPSQGGGGWGQPHGGGWGQPHGGGWGQPHGGGWGQPHGGGWGQPHGGGGWGQGGTHSQWNKPSKPKTNMKHMAGAAAAGAVVGGLGGYMLGSAMSRPLIHFGNDYEDRYYRENMHRYPNQVYYRPVDQYSNQNNFVHDCVNITVKEHTVTTTTKGENFTETDIKMMERVVEQMCITQYQRESQAYYQRGASVILFSSPPVILLISLLIFLIVG</sequence>
<proteinExistence type="inferred from homology"/>
<reference key="1">
    <citation type="journal article" date="2004" name="Proc. Natl. Acad. Sci. U.S.A.">
        <title>Prion protein gene (PRNP) variants and evidence for strong purifying selection in functionally important regions of bovine exon 3.</title>
        <authorList>
            <person name="Seabury C.M."/>
            <person name="Honeycutt R.L."/>
            <person name="Rooney A.P."/>
            <person name="Halbert N.D."/>
            <person name="Derr J.N."/>
        </authorList>
    </citation>
    <scope>NUCLEOTIDE SEQUENCE [GENOMIC DNA]</scope>
    <source>
        <strain>Isolate JW41_1</strain>
        <strain>Isolate JW41_2</strain>
    </source>
</reference>
<keyword id="KW-0034">Amyloid</keyword>
<keyword id="KW-1003">Cell membrane</keyword>
<keyword id="KW-0186">Copper</keyword>
<keyword id="KW-1015">Disulfide bond</keyword>
<keyword id="KW-0325">Glycoprotein</keyword>
<keyword id="KW-0333">Golgi apparatus</keyword>
<keyword id="KW-0336">GPI-anchor</keyword>
<keyword id="KW-0449">Lipoprotein</keyword>
<keyword id="KW-0472">Membrane</keyword>
<keyword id="KW-0479">Metal-binding</keyword>
<keyword id="KW-0640">Prion</keyword>
<keyword id="KW-0677">Repeat</keyword>
<keyword id="KW-0732">Signal</keyword>
<keyword id="KW-0862">Zinc</keyword>
<comment type="function">
    <text evidence="2 4">Its primary physiological function is unclear. Has cytoprotective activity against internal or environmental stresses. May play a role in neuronal development and synaptic plasticity. May be required for neuronal myelin sheath maintenance. May play a role in iron uptake and iron homeostasis. Soluble oligomers are toxic to cultured neuroblastoma cells and induce apoptosis (in vitro). Association with GPC1 (via its heparan sulfate chains) targets PRNP to lipid rafts. Also provides Cu(2+) or Zn(2+) for the ascorbate-mediated GPC1 deaminase degradation of its heparan sulfate side chains (By similarity).</text>
</comment>
<comment type="subunit">
    <text evidence="2 4">Monomer and homodimer. Has a tendency to aggregate into amyloid fibrils containing a cross-beta spine, formed by a steric zipper of superposed beta-strands. Soluble oligomers may represent an intermediate stage on the path to fibril formation. Copper binding may promote oligomerization. Interacts with GRB2, APP, ERI3/PRNPIP and SYN1. Mislocalized cytosolically exposed PrP interacts with MGRN1; this interaction alters MGRN1 subcellular location and causes lysosomal enlargement. Interacts with KIAA1191.</text>
</comment>
<comment type="subcellular location">
    <subcellularLocation>
        <location evidence="2">Cell membrane</location>
        <topology evidence="2">Lipid-anchor</topology>
        <topology evidence="2">GPI-anchor</topology>
    </subcellularLocation>
    <subcellularLocation>
        <location evidence="4">Golgi apparatus</location>
    </subcellularLocation>
    <text evidence="2">Targeted to lipid rafts via association with the heparan sulfate chains of GPC1. Colocates, in the presence of Cu(2+), to vesicles in para- and perinuclear regions, where both proteins undergo internalization. Heparin displaces PRNP from lipid rafts and promotes endocytosis.</text>
</comment>
<comment type="domain">
    <text evidence="2">The normal, monomeric form has a mainly alpha-helical structure. The disease-associated, protease-resistant form forms amyloid fibrils containing a cross-beta spine, formed by a steric zipper of superposed beta-strands. Disease mutations may favor intermolecular contacts via short beta strands, and may thereby trigger oligomerization.</text>
</comment>
<comment type="domain">
    <text evidence="2">Contains an N-terminal region composed of octamer repeats. At low copper concentrations, the sidechains of His residues from three or four repeats contribute to the binding of a single copper ion. Alternatively, a copper ion can be bound by interaction with the sidechain and backbone amide nitrogen of a single His residue. The observed copper binding stoichiometry suggests that two repeat regions cooperate to stabilize the binding of a single copper ion. At higher copper concentrations, each octamer can bind one copper ion by interactions with the His sidechain and Gly backbone atoms. A mixture of binding types may occur, especially in the case of octamer repeat expansion. Copper binding may stabilize the conformation of this region and may promote oligomerization.</text>
</comment>
<comment type="disease">
    <text evidence="7">Variations in PRNP are responsible of transmissible bovine spongiform encephalopathies (BSE), a class of neurodegenerative diseases that affect various mammals. These diseases are caused by abnormally folded prion proteins. BSE can be subdivided into at least three groups: classical, H-type and L-type, with the latter 2 collectively referred to as atypical BSE. Susceptibility or resistance to a BSE disease can be influenced by at least 3 factors related to the host prion protein: protein expression levels, number of octapeptide repeats, and specific polymorphisms. In cattle, as in humans, BSEs can occur as infectious, spontaneous and genetic diseases.</text>
</comment>
<comment type="similarity">
    <text evidence="7">Belongs to the prion family.</text>
</comment>